<evidence type="ECO:0000255" key="1"/>
<evidence type="ECO:0000256" key="2">
    <source>
        <dbReference type="SAM" id="MobiDB-lite"/>
    </source>
</evidence>
<evidence type="ECO:0000269" key="3">
    <source>
    </source>
</evidence>
<evidence type="ECO:0000303" key="4">
    <source>
    </source>
</evidence>
<evidence type="ECO:0000305" key="5"/>
<feature type="signal peptide" evidence="1">
    <location>
        <begin position="1"/>
        <end position="23"/>
    </location>
</feature>
<feature type="chain" id="PRO_0000317636" description="Uncharacterized protein C5orf46">
    <location>
        <begin position="24"/>
        <end position="87"/>
    </location>
</feature>
<feature type="region of interest" description="Disordered" evidence="2">
    <location>
        <begin position="24"/>
        <end position="44"/>
    </location>
</feature>
<feature type="splice variant" id="VSP_031115" description="In isoform 2." evidence="4">
    <location>
        <begin position="73"/>
        <end position="87"/>
    </location>
</feature>
<feature type="sequence variant" id="VAR_056787" description="In dbSNP:rs7722926." evidence="3">
    <original>F</original>
    <variation>I</variation>
    <location>
        <position position="18"/>
    </location>
</feature>
<feature type="sequence conflict" description="In Ref. 2; AAQ89019 and 4; AAH21680." evidence="5" ref="2 4">
    <original>S</original>
    <variation>L</variation>
    <location>
        <position position="4"/>
    </location>
</feature>
<keyword id="KW-0025">Alternative splicing</keyword>
<keyword id="KW-1267">Proteomics identification</keyword>
<keyword id="KW-1185">Reference proteome</keyword>
<keyword id="KW-0964">Secreted</keyword>
<keyword id="KW-0732">Signal</keyword>
<organism>
    <name type="scientific">Homo sapiens</name>
    <name type="common">Human</name>
    <dbReference type="NCBI Taxonomy" id="9606"/>
    <lineage>
        <taxon>Eukaryota</taxon>
        <taxon>Metazoa</taxon>
        <taxon>Chordata</taxon>
        <taxon>Craniata</taxon>
        <taxon>Vertebrata</taxon>
        <taxon>Euteleostomi</taxon>
        <taxon>Mammalia</taxon>
        <taxon>Eutheria</taxon>
        <taxon>Euarchontoglires</taxon>
        <taxon>Primates</taxon>
        <taxon>Haplorrhini</taxon>
        <taxon>Catarrhini</taxon>
        <taxon>Hominidae</taxon>
        <taxon>Homo</taxon>
    </lineage>
</organism>
<name>CE046_HUMAN</name>
<reference key="1">
    <citation type="journal article" date="2004" name="Nat. Genet.">
        <title>Complete sequencing and characterization of 21,243 full-length human cDNAs.</title>
        <authorList>
            <person name="Ota T."/>
            <person name="Suzuki Y."/>
            <person name="Nishikawa T."/>
            <person name="Otsuki T."/>
            <person name="Sugiyama T."/>
            <person name="Irie R."/>
            <person name="Wakamatsu A."/>
            <person name="Hayashi K."/>
            <person name="Sato H."/>
            <person name="Nagai K."/>
            <person name="Kimura K."/>
            <person name="Makita H."/>
            <person name="Sekine M."/>
            <person name="Obayashi M."/>
            <person name="Nishi T."/>
            <person name="Shibahara T."/>
            <person name="Tanaka T."/>
            <person name="Ishii S."/>
            <person name="Yamamoto J."/>
            <person name="Saito K."/>
            <person name="Kawai Y."/>
            <person name="Isono Y."/>
            <person name="Nakamura Y."/>
            <person name="Nagahari K."/>
            <person name="Murakami K."/>
            <person name="Yasuda T."/>
            <person name="Iwayanagi T."/>
            <person name="Wagatsuma M."/>
            <person name="Shiratori A."/>
            <person name="Sudo H."/>
            <person name="Hosoiri T."/>
            <person name="Kaku Y."/>
            <person name="Kodaira H."/>
            <person name="Kondo H."/>
            <person name="Sugawara M."/>
            <person name="Takahashi M."/>
            <person name="Kanda K."/>
            <person name="Yokoi T."/>
            <person name="Furuya T."/>
            <person name="Kikkawa E."/>
            <person name="Omura Y."/>
            <person name="Abe K."/>
            <person name="Kamihara K."/>
            <person name="Katsuta N."/>
            <person name="Sato K."/>
            <person name="Tanikawa M."/>
            <person name="Yamazaki M."/>
            <person name="Ninomiya K."/>
            <person name="Ishibashi T."/>
            <person name="Yamashita H."/>
            <person name="Murakawa K."/>
            <person name="Fujimori K."/>
            <person name="Tanai H."/>
            <person name="Kimata M."/>
            <person name="Watanabe M."/>
            <person name="Hiraoka S."/>
            <person name="Chiba Y."/>
            <person name="Ishida S."/>
            <person name="Ono Y."/>
            <person name="Takiguchi S."/>
            <person name="Watanabe S."/>
            <person name="Yosida M."/>
            <person name="Hotuta T."/>
            <person name="Kusano J."/>
            <person name="Kanehori K."/>
            <person name="Takahashi-Fujii A."/>
            <person name="Hara H."/>
            <person name="Tanase T.-O."/>
            <person name="Nomura Y."/>
            <person name="Togiya S."/>
            <person name="Komai F."/>
            <person name="Hara R."/>
            <person name="Takeuchi K."/>
            <person name="Arita M."/>
            <person name="Imose N."/>
            <person name="Musashino K."/>
            <person name="Yuuki H."/>
            <person name="Oshima A."/>
            <person name="Sasaki N."/>
            <person name="Aotsuka S."/>
            <person name="Yoshikawa Y."/>
            <person name="Matsunawa H."/>
            <person name="Ichihara T."/>
            <person name="Shiohata N."/>
            <person name="Sano S."/>
            <person name="Moriya S."/>
            <person name="Momiyama H."/>
            <person name="Satoh N."/>
            <person name="Takami S."/>
            <person name="Terashima Y."/>
            <person name="Suzuki O."/>
            <person name="Nakagawa S."/>
            <person name="Senoh A."/>
            <person name="Mizoguchi H."/>
            <person name="Goto Y."/>
            <person name="Shimizu F."/>
            <person name="Wakebe H."/>
            <person name="Hishigaki H."/>
            <person name="Watanabe T."/>
            <person name="Sugiyama A."/>
            <person name="Takemoto M."/>
            <person name="Kawakami B."/>
            <person name="Yamazaki M."/>
            <person name="Watanabe K."/>
            <person name="Kumagai A."/>
            <person name="Itakura S."/>
            <person name="Fukuzumi Y."/>
            <person name="Fujimori Y."/>
            <person name="Komiyama M."/>
            <person name="Tashiro H."/>
            <person name="Tanigami A."/>
            <person name="Fujiwara T."/>
            <person name="Ono T."/>
            <person name="Yamada K."/>
            <person name="Fujii Y."/>
            <person name="Ozaki K."/>
            <person name="Hirao M."/>
            <person name="Ohmori Y."/>
            <person name="Kawabata A."/>
            <person name="Hikiji T."/>
            <person name="Kobatake N."/>
            <person name="Inagaki H."/>
            <person name="Ikema Y."/>
            <person name="Okamoto S."/>
            <person name="Okitani R."/>
            <person name="Kawakami T."/>
            <person name="Noguchi S."/>
            <person name="Itoh T."/>
            <person name="Shigeta K."/>
            <person name="Senba T."/>
            <person name="Matsumura K."/>
            <person name="Nakajima Y."/>
            <person name="Mizuno T."/>
            <person name="Morinaga M."/>
            <person name="Sasaki M."/>
            <person name="Togashi T."/>
            <person name="Oyama M."/>
            <person name="Hata H."/>
            <person name="Watanabe M."/>
            <person name="Komatsu T."/>
            <person name="Mizushima-Sugano J."/>
            <person name="Satoh T."/>
            <person name="Shirai Y."/>
            <person name="Takahashi Y."/>
            <person name="Nakagawa K."/>
            <person name="Okumura K."/>
            <person name="Nagase T."/>
            <person name="Nomura N."/>
            <person name="Kikuchi H."/>
            <person name="Masuho Y."/>
            <person name="Yamashita R."/>
            <person name="Nakai K."/>
            <person name="Yada T."/>
            <person name="Nakamura Y."/>
            <person name="Ohara O."/>
            <person name="Isogai T."/>
            <person name="Sugano S."/>
        </authorList>
    </citation>
    <scope>NUCLEOTIDE SEQUENCE [LARGE SCALE MRNA] (ISOFORM 1)</scope>
    <scope>VARIANT ILE-18</scope>
</reference>
<reference key="2">
    <citation type="journal article" date="2003" name="Genome Res.">
        <title>The secreted protein discovery initiative (SPDI), a large-scale effort to identify novel human secreted and transmembrane proteins: a bioinformatics assessment.</title>
        <authorList>
            <person name="Clark H.F."/>
            <person name="Gurney A.L."/>
            <person name="Abaya E."/>
            <person name="Baker K."/>
            <person name="Baldwin D.T."/>
            <person name="Brush J."/>
            <person name="Chen J."/>
            <person name="Chow B."/>
            <person name="Chui C."/>
            <person name="Crowley C."/>
            <person name="Currell B."/>
            <person name="Deuel B."/>
            <person name="Dowd P."/>
            <person name="Eaton D."/>
            <person name="Foster J.S."/>
            <person name="Grimaldi C."/>
            <person name="Gu Q."/>
            <person name="Hass P.E."/>
            <person name="Heldens S."/>
            <person name="Huang A."/>
            <person name="Kim H.S."/>
            <person name="Klimowski L."/>
            <person name="Jin Y."/>
            <person name="Johnson S."/>
            <person name="Lee J."/>
            <person name="Lewis L."/>
            <person name="Liao D."/>
            <person name="Mark M.R."/>
            <person name="Robbie E."/>
            <person name="Sanchez C."/>
            <person name="Schoenfeld J."/>
            <person name="Seshagiri S."/>
            <person name="Simmons L."/>
            <person name="Singh J."/>
            <person name="Smith V."/>
            <person name="Stinson J."/>
            <person name="Vagts A."/>
            <person name="Vandlen R.L."/>
            <person name="Watanabe C."/>
            <person name="Wieand D."/>
            <person name="Woods K."/>
            <person name="Xie M.-H."/>
            <person name="Yansura D.G."/>
            <person name="Yi S."/>
            <person name="Yu G."/>
            <person name="Yuan J."/>
            <person name="Zhang M."/>
            <person name="Zhang Z."/>
            <person name="Goddard A.D."/>
            <person name="Wood W.I."/>
            <person name="Godowski P.J."/>
            <person name="Gray A.M."/>
        </authorList>
    </citation>
    <scope>NUCLEOTIDE SEQUENCE [LARGE SCALE MRNA] (ISOFORM 1)</scope>
</reference>
<reference key="3">
    <citation type="journal article" date="2004" name="Nature">
        <title>The DNA sequence and comparative analysis of human chromosome 5.</title>
        <authorList>
            <person name="Schmutz J."/>
            <person name="Martin J."/>
            <person name="Terry A."/>
            <person name="Couronne O."/>
            <person name="Grimwood J."/>
            <person name="Lowry S."/>
            <person name="Gordon L.A."/>
            <person name="Scott D."/>
            <person name="Xie G."/>
            <person name="Huang W."/>
            <person name="Hellsten U."/>
            <person name="Tran-Gyamfi M."/>
            <person name="She X."/>
            <person name="Prabhakar S."/>
            <person name="Aerts A."/>
            <person name="Altherr M."/>
            <person name="Bajorek E."/>
            <person name="Black S."/>
            <person name="Branscomb E."/>
            <person name="Caoile C."/>
            <person name="Challacombe J.F."/>
            <person name="Chan Y.M."/>
            <person name="Denys M."/>
            <person name="Detter J.C."/>
            <person name="Escobar J."/>
            <person name="Flowers D."/>
            <person name="Fotopulos D."/>
            <person name="Glavina T."/>
            <person name="Gomez M."/>
            <person name="Gonzales E."/>
            <person name="Goodstein D."/>
            <person name="Grigoriev I."/>
            <person name="Groza M."/>
            <person name="Hammon N."/>
            <person name="Hawkins T."/>
            <person name="Haydu L."/>
            <person name="Israni S."/>
            <person name="Jett J."/>
            <person name="Kadner K."/>
            <person name="Kimball H."/>
            <person name="Kobayashi A."/>
            <person name="Lopez F."/>
            <person name="Lou Y."/>
            <person name="Martinez D."/>
            <person name="Medina C."/>
            <person name="Morgan J."/>
            <person name="Nandkeshwar R."/>
            <person name="Noonan J.P."/>
            <person name="Pitluck S."/>
            <person name="Pollard M."/>
            <person name="Predki P."/>
            <person name="Priest J."/>
            <person name="Ramirez L."/>
            <person name="Retterer J."/>
            <person name="Rodriguez A."/>
            <person name="Rogers S."/>
            <person name="Salamov A."/>
            <person name="Salazar A."/>
            <person name="Thayer N."/>
            <person name="Tice H."/>
            <person name="Tsai M."/>
            <person name="Ustaszewska A."/>
            <person name="Vo N."/>
            <person name="Wheeler J."/>
            <person name="Wu K."/>
            <person name="Yang J."/>
            <person name="Dickson M."/>
            <person name="Cheng J.-F."/>
            <person name="Eichler E.E."/>
            <person name="Olsen A."/>
            <person name="Pennacchio L.A."/>
            <person name="Rokhsar D.S."/>
            <person name="Richardson P."/>
            <person name="Lucas S.M."/>
            <person name="Myers R.M."/>
            <person name="Rubin E.M."/>
        </authorList>
    </citation>
    <scope>NUCLEOTIDE SEQUENCE [LARGE SCALE GENOMIC DNA]</scope>
</reference>
<reference key="4">
    <citation type="journal article" date="2004" name="Genome Res.">
        <title>The status, quality, and expansion of the NIH full-length cDNA project: the Mammalian Gene Collection (MGC).</title>
        <authorList>
            <consortium name="The MGC Project Team"/>
        </authorList>
    </citation>
    <scope>NUCLEOTIDE SEQUENCE [LARGE SCALE MRNA] (ISOFORM 2)</scope>
    <source>
        <tissue>Prostate</tissue>
    </source>
</reference>
<comment type="interaction">
    <interactant intactId="EBI-11986083">
        <id>Q6UWT4</id>
    </interactant>
    <interactant intactId="EBI-13059134">
        <id>Q13520</id>
        <label>AQP6</label>
    </interactant>
    <organismsDiffer>false</organismsDiffer>
    <experiments>3</experiments>
</comment>
<comment type="interaction">
    <interactant intactId="EBI-11986083">
        <id>Q6UWT4</id>
    </interactant>
    <interactant intactId="EBI-3915253">
        <id>Q15125</id>
        <label>EBP</label>
    </interactant>
    <organismsDiffer>false</organismsDiffer>
    <experiments>3</experiments>
</comment>
<comment type="interaction">
    <interactant intactId="EBI-11986083">
        <id>Q6UWT4</id>
    </interactant>
    <interactant intactId="EBI-18938272">
        <id>Q96KR6</id>
        <label>FAM210B</label>
    </interactant>
    <organismsDiffer>false</organismsDiffer>
    <experiments>3</experiments>
</comment>
<comment type="interaction">
    <interactant intactId="EBI-11986083">
        <id>Q6UWT4</id>
    </interactant>
    <interactant intactId="EBI-2820517">
        <id>Q8TAF8</id>
        <label>LHFPL5</label>
    </interactant>
    <organismsDiffer>false</organismsDiffer>
    <experiments>3</experiments>
</comment>
<comment type="interaction">
    <interactant intactId="EBI-11986083">
        <id>Q6UWT4</id>
    </interactant>
    <interactant intactId="EBI-594836">
        <id>O00623</id>
        <label>PEX12</label>
    </interactant>
    <organismsDiffer>false</organismsDiffer>
    <experiments>3</experiments>
</comment>
<comment type="interaction">
    <interactant intactId="EBI-11986083">
        <id>Q6UWT4</id>
    </interactant>
    <interactant intactId="EBI-8636004">
        <id>Q96GQ5</id>
        <label>RUSF1</label>
    </interactant>
    <organismsDiffer>false</organismsDiffer>
    <experiments>3</experiments>
</comment>
<comment type="interaction">
    <interactant intactId="EBI-11986083">
        <id>Q6UWT4</id>
    </interactant>
    <interactant intactId="EBI-347996">
        <id>O43765</id>
        <label>SGTA</label>
    </interactant>
    <organismsDiffer>false</organismsDiffer>
    <experiments>3</experiments>
</comment>
<comment type="interaction">
    <interactant intactId="EBI-11986083">
        <id>Q6UWT4</id>
    </interactant>
    <interactant intactId="EBI-744081">
        <id>Q96EQ0</id>
        <label>SGTB</label>
    </interactant>
    <organismsDiffer>false</organismsDiffer>
    <experiments>3</experiments>
</comment>
<comment type="interaction">
    <interactant intactId="EBI-11986083">
        <id>Q6UWT4</id>
    </interactant>
    <interactant intactId="EBI-8644112">
        <id>Q9BRI3</id>
        <label>SLC30A2</label>
    </interactant>
    <organismsDiffer>false</organismsDiffer>
    <experiments>5</experiments>
</comment>
<comment type="interaction">
    <interactant intactId="EBI-11986083">
        <id>Q6UWT4</id>
    </interactant>
    <interactant intactId="EBI-18271435">
        <id>Q0VAB0</id>
        <label>TBXA2R</label>
    </interactant>
    <organismsDiffer>false</organismsDiffer>
    <experiments>3</experiments>
</comment>
<comment type="interaction">
    <interactant intactId="EBI-11986083">
        <id>Q6UWT4</id>
    </interactant>
    <interactant intactId="EBI-6268651">
        <id>Q9NPL8</id>
        <label>TIMMDC1</label>
    </interactant>
    <organismsDiffer>false</organismsDiffer>
    <experiments>3</experiments>
</comment>
<comment type="interaction">
    <interactant intactId="EBI-11986083">
        <id>Q6UWT4</id>
    </interactant>
    <interactant intactId="EBI-1045825">
        <id>P55061</id>
        <label>TMBIM6</label>
    </interactant>
    <organismsDiffer>false</organismsDiffer>
    <experiments>2</experiments>
</comment>
<comment type="interaction">
    <interactant intactId="EBI-11986083">
        <id>Q6UWT4</id>
    </interactant>
    <interactant intactId="EBI-11742770">
        <id>Q96HE8</id>
        <label>TMEM80</label>
    </interactant>
    <organismsDiffer>false</organismsDiffer>
    <experiments>3</experiments>
</comment>
<comment type="subcellular location">
    <subcellularLocation>
        <location evidence="5">Secreted</location>
    </subcellularLocation>
</comment>
<comment type="alternative products">
    <event type="alternative splicing"/>
    <isoform>
        <id>Q6UWT4-1</id>
        <name>1</name>
        <sequence type="displayed"/>
    </isoform>
    <isoform>
        <id>Q6UWT4-2</id>
        <name>2</name>
        <sequence type="described" ref="VSP_031115"/>
    </isoform>
</comment>
<dbReference type="EMBL" id="AK289403">
    <property type="protein sequence ID" value="BAF82092.1"/>
    <property type="molecule type" value="mRNA"/>
</dbReference>
<dbReference type="EMBL" id="AY358656">
    <property type="protein sequence ID" value="AAQ89019.1"/>
    <property type="molecule type" value="mRNA"/>
</dbReference>
<dbReference type="EMBL" id="AC011352">
    <property type="status" value="NOT_ANNOTATED_CDS"/>
    <property type="molecule type" value="Genomic_DNA"/>
</dbReference>
<dbReference type="EMBL" id="BC021680">
    <property type="protein sequence ID" value="AAH21680.1"/>
    <property type="molecule type" value="mRNA"/>
</dbReference>
<dbReference type="CCDS" id="CCDS34267.1">
    <molecule id="Q6UWT4-1"/>
</dbReference>
<dbReference type="RefSeq" id="NP_996849.2">
    <molecule id="Q6UWT4-1"/>
    <property type="nucleotide sequence ID" value="NM_206966.3"/>
</dbReference>
<dbReference type="RefSeq" id="XP_005268503.3">
    <molecule id="Q6UWT4-1"/>
    <property type="nucleotide sequence ID" value="XM_005268446.4"/>
</dbReference>
<dbReference type="RefSeq" id="XP_047273125.1">
    <molecule id="Q6UWT4-1"/>
    <property type="nucleotide sequence ID" value="XM_047417169.1"/>
</dbReference>
<dbReference type="RefSeq" id="XP_054208543.1">
    <molecule id="Q6UWT4-1"/>
    <property type="nucleotide sequence ID" value="XM_054352568.1"/>
</dbReference>
<dbReference type="BioGRID" id="133099">
    <property type="interactions" value="23"/>
</dbReference>
<dbReference type="FunCoup" id="Q6UWT4">
    <property type="interactions" value="25"/>
</dbReference>
<dbReference type="IntAct" id="Q6UWT4">
    <property type="interactions" value="14"/>
</dbReference>
<dbReference type="STRING" id="9606.ENSP00000315370"/>
<dbReference type="iPTMnet" id="Q6UWT4"/>
<dbReference type="PhosphoSitePlus" id="Q6UWT4"/>
<dbReference type="BioMuta" id="C5orf46"/>
<dbReference type="DMDM" id="296434440"/>
<dbReference type="MassIVE" id="Q6UWT4"/>
<dbReference type="PaxDb" id="9606-ENSP00000315370"/>
<dbReference type="PeptideAtlas" id="Q6UWT4"/>
<dbReference type="ProteomicsDB" id="67521">
    <molecule id="Q6UWT4-1"/>
</dbReference>
<dbReference type="Antibodypedia" id="82283">
    <property type="antibodies" value="3 antibodies from 3 providers"/>
</dbReference>
<dbReference type="DNASU" id="389336"/>
<dbReference type="Ensembl" id="ENST00000318315.5">
    <molecule id="Q6UWT4-1"/>
    <property type="protein sequence ID" value="ENSP00000315370.4"/>
    <property type="gene ID" value="ENSG00000178776.5"/>
</dbReference>
<dbReference type="Ensembl" id="ENST00000515291.1">
    <molecule id="Q6UWT4-2"/>
    <property type="protein sequence ID" value="ENSP00000425984.1"/>
    <property type="gene ID" value="ENSG00000178776.5"/>
</dbReference>
<dbReference type="GeneID" id="389336"/>
<dbReference type="KEGG" id="hsa:389336"/>
<dbReference type="MANE-Select" id="ENST00000318315.5">
    <property type="protein sequence ID" value="ENSP00000315370.4"/>
    <property type="RefSeq nucleotide sequence ID" value="NM_206966.3"/>
    <property type="RefSeq protein sequence ID" value="NP_996849.2"/>
</dbReference>
<dbReference type="UCSC" id="uc003lou.4">
    <molecule id="Q6UWT4-1"/>
    <property type="organism name" value="human"/>
</dbReference>
<dbReference type="AGR" id="HGNC:33768"/>
<dbReference type="CTD" id="389336"/>
<dbReference type="DisGeNET" id="389336"/>
<dbReference type="GeneCards" id="C5orf46"/>
<dbReference type="HGNC" id="HGNC:33768">
    <property type="gene designation" value="C5orf46"/>
</dbReference>
<dbReference type="HPA" id="ENSG00000178776">
    <property type="expression patterns" value="Group enriched (salivary gland, skin)"/>
</dbReference>
<dbReference type="neXtProt" id="NX_Q6UWT4"/>
<dbReference type="OpenTargets" id="ENSG00000178776"/>
<dbReference type="PharmGKB" id="PA162380305"/>
<dbReference type="VEuPathDB" id="HostDB:ENSG00000178776"/>
<dbReference type="eggNOG" id="ENOG502TEYM">
    <property type="taxonomic scope" value="Eukaryota"/>
</dbReference>
<dbReference type="GeneTree" id="ENSGT00390000011484"/>
<dbReference type="HOGENOM" id="CLU_171946_0_0_1"/>
<dbReference type="InParanoid" id="Q6UWT4"/>
<dbReference type="OMA" id="FQMYLNN"/>
<dbReference type="OrthoDB" id="9539876at2759"/>
<dbReference type="PAN-GO" id="Q6UWT4">
    <property type="GO annotations" value="0 GO annotations based on evolutionary models"/>
</dbReference>
<dbReference type="PhylomeDB" id="Q6UWT4"/>
<dbReference type="TreeFam" id="TF338370"/>
<dbReference type="PathwayCommons" id="Q6UWT4"/>
<dbReference type="SignaLink" id="Q6UWT4"/>
<dbReference type="BioGRID-ORCS" id="389336">
    <property type="hits" value="10 hits in 1128 CRISPR screens"/>
</dbReference>
<dbReference type="ChiTaRS" id="C5orf46">
    <property type="organism name" value="human"/>
</dbReference>
<dbReference type="GenomeRNAi" id="389336"/>
<dbReference type="Pharos" id="Q6UWT4">
    <property type="development level" value="Tdark"/>
</dbReference>
<dbReference type="PRO" id="PR:Q6UWT4"/>
<dbReference type="Proteomes" id="UP000005640">
    <property type="component" value="Chromosome 5"/>
</dbReference>
<dbReference type="RNAct" id="Q6UWT4">
    <property type="molecule type" value="protein"/>
</dbReference>
<dbReference type="Bgee" id="ENSG00000178776">
    <property type="expression patterns" value="Expressed in male germ line stem cell (sensu Vertebrata) in testis and 110 other cell types or tissues"/>
</dbReference>
<dbReference type="GO" id="GO:0070062">
    <property type="term" value="C:extracellular exosome"/>
    <property type="evidence" value="ECO:0007005"/>
    <property type="project" value="UniProtKB"/>
</dbReference>
<dbReference type="InterPro" id="IPR027950">
    <property type="entry name" value="DUF4576"/>
</dbReference>
<dbReference type="PANTHER" id="PTHR37864">
    <property type="entry name" value="SIMILAR TO AVLV472"/>
    <property type="match status" value="1"/>
</dbReference>
<dbReference type="PANTHER" id="PTHR37864:SF1">
    <property type="entry name" value="SIMILAR TO AVLV472"/>
    <property type="match status" value="1"/>
</dbReference>
<dbReference type="Pfam" id="PF15144">
    <property type="entry name" value="DUF4576"/>
    <property type="match status" value="1"/>
</dbReference>
<accession>Q6UWT4</accession>
<accession>A8K038</accession>
<accession>Q8WU04</accession>
<proteinExistence type="evidence at protein level"/>
<gene>
    <name type="primary">C5orf46</name>
    <name type="ORF">UNQ472/PRO839</name>
</gene>
<sequence length="87" mass="9693">MAVSVLRLTVVLGLLVLFLTCYADDKPDKPDDKPDDSGKDPKPDFPKFLSLLGTEIIENAVEFILRSMSRSTGFMEFDDNEGKHSSK</sequence>
<protein>
    <recommendedName>
        <fullName>Uncharacterized protein C5orf46</fullName>
    </recommendedName>
</protein>